<keyword id="KW-0002">3D-structure</keyword>
<keyword id="KW-0007">Acetylation</keyword>
<keyword id="KW-1072">Activation of host autophagy by virus</keyword>
<keyword id="KW-0067">ATP-binding</keyword>
<keyword id="KW-0167">Capsid protein</keyword>
<keyword id="KW-1165">Clathrin-mediated endocytosis of virus by host</keyword>
<keyword id="KW-0165">Cleavage on pair of basic residues</keyword>
<keyword id="KW-1015">Disulfide bond</keyword>
<keyword id="KW-1170">Fusion of virus membrane with host endosomal membrane</keyword>
<keyword id="KW-1168">Fusion of virus membrane with host membrane</keyword>
<keyword id="KW-0325">Glycoprotein</keyword>
<keyword id="KW-0347">Helicase</keyword>
<keyword id="KW-1035">Host cytoplasm</keyword>
<keyword id="KW-1038">Host endoplasmic reticulum</keyword>
<keyword id="KW-1043">Host membrane</keyword>
<keyword id="KW-1048">Host nucleus</keyword>
<keyword id="KW-0945">Host-virus interaction</keyword>
<keyword id="KW-0378">Hydrolase</keyword>
<keyword id="KW-1090">Inhibition of host innate immune response by virus</keyword>
<keyword id="KW-1114">Inhibition of host interferon signaling pathway by virus</keyword>
<keyword id="KW-1105">Inhibition of host STAT1 by virus</keyword>
<keyword id="KW-1106">Inhibition of host STAT2 by virus</keyword>
<keyword id="KW-0922">Interferon antiviral system evasion</keyword>
<keyword id="KW-0472">Membrane</keyword>
<keyword id="KW-0479">Metal-binding</keyword>
<keyword id="KW-0489">Methyltransferase</keyword>
<keyword id="KW-0506">mRNA capping</keyword>
<keyword id="KW-0507">mRNA processing</keyword>
<keyword id="KW-0511">Multifunctional enzyme</keyword>
<keyword id="KW-0547">Nucleotide-binding</keyword>
<keyword id="KW-0548">Nucleotidyltransferase</keyword>
<keyword id="KW-0597">Phosphoprotein</keyword>
<keyword id="KW-0645">Protease</keyword>
<keyword id="KW-0694">RNA-binding</keyword>
<keyword id="KW-0696">RNA-directed RNA polymerase</keyword>
<keyword id="KW-0949">S-adenosyl-L-methionine</keyword>
<keyword id="KW-0964">Secreted</keyword>
<keyword id="KW-0720">Serine protease</keyword>
<keyword id="KW-0941">Suppressor of RNA silencing</keyword>
<keyword id="KW-0804">Transcription</keyword>
<keyword id="KW-0805">Transcription regulation</keyword>
<keyword id="KW-0808">Transferase</keyword>
<keyword id="KW-0812">Transmembrane</keyword>
<keyword id="KW-1133">Transmembrane helix</keyword>
<keyword id="KW-1161">Viral attachment to host cell</keyword>
<keyword id="KW-0261">Viral envelope protein</keyword>
<keyword id="KW-0899">Viral immunoevasion</keyword>
<keyword id="KW-1162">Viral penetration into host cytoplasm</keyword>
<keyword id="KW-0693">Viral RNA replication</keyword>
<keyword id="KW-0946">Virion</keyword>
<keyword id="KW-1164">Virus endocytosis by host</keyword>
<keyword id="KW-1160">Virus entry into host cell</keyword>
<keyword id="KW-0862">Zinc</keyword>
<reference key="1">
    <citation type="journal article" date="1993" name="Virology">
        <title>Complete genomic sequence of Powassan virus: evaluation of genetic elements in tick-borne versus mosquito-borne flaviviruses.</title>
        <authorList>
            <person name="Mandl C.W."/>
            <person name="Holzmann H."/>
            <person name="Kunz C."/>
            <person name="Heinz F.X."/>
        </authorList>
    </citation>
    <scope>NUCLEOTIDE SEQUENCE [GENOMIC RNA]</scope>
</reference>
<comment type="function">
    <molecule>Capsid protein C</molecule>
    <text evidence="5">Plays a role in virus budding by binding to the cell membrane and gathering the viral RNA into a nucleocapsid that forms the core of a mature virus particle. During virus entry, may induce genome penetration into the host cytoplasm after hemifusion induced by the surface proteins. Can migrate to the cell nucleus where it modulates host functions.</text>
</comment>
<comment type="function">
    <molecule>Capsid protein C</molecule>
    <text evidence="1">Inhibits RNA silencing by interfering with host Dicer.</text>
</comment>
<comment type="function">
    <molecule>Peptide pr</molecule>
    <text evidence="5">Prevents premature fusion activity of envelope proteins in trans-Golgi by binding to envelope protein E at pH6.0. After virion release in extracellular space, gets dissociated from E dimers.</text>
</comment>
<comment type="function">
    <molecule>Protein prM</molecule>
    <text evidence="5">Acts as a chaperone for envelope protein E during intracellular virion assembly by masking and inactivating envelope protein E fusion peptide. prM is the only viral peptide matured by host furin in the trans-Golgi network probably to avoid catastrophic activation of the viral fusion activity in acidic Golgi compartment prior to virion release. prM-E cleavage is inefficient, and many virions are only partially matured. These uncleaved prM would play a role in immune evasion.</text>
</comment>
<comment type="function">
    <molecule>Small envelope protein M</molecule>
    <text evidence="5">May play a role in virus budding. Exerts cytotoxic effects by activating a mitochondrial apoptotic pathway through M ectodomain. May display a viroporin activity.</text>
</comment>
<comment type="function">
    <molecule>Envelope protein E</molecule>
    <text evidence="5">Binds to host cell surface receptor and mediates fusion between viral and cellular membranes. Envelope protein is synthesized in the endoplasmic reticulum in the form of heterodimer with protein prM. They play a role in virion budding in the ER, and the newly formed immature particle is covered with 60 spikes composed of heterodimer between precursor prM and envelope protein E. The virion is transported to the Golgi apparatus where the low pH causes dissociation of PrM-E heterodimers and formation of E homodimers. prM-E cleavage is inefficient, and many virions are only partially matured. These uncleaved prM would play a role in immune evasion.</text>
</comment>
<comment type="function">
    <molecule>Non-structural protein 1</molecule>
    <text evidence="9">Involved in immune evasion, pathogenesis and viral replication. Once cleaved off the polyprotein, is targeted to three destinations: the viral replication cycle, the plasma membrane and the extracellular compartment. Essential for viral replication. Required for formation of the replication complex and recruitment of other non-structural proteins to the ER-derived membrane structures. Excreted as a hexameric lipoparticle that plays a role against host immune response. Antagonizing the complement function. Binds to the host macrophages and dendritic cells. Inhibits signal transduction originating from Toll-like receptor 3 (TLR3).</text>
</comment>
<comment type="function">
    <molecule>Non-structural protein 2A</molecule>
    <text evidence="5">Component of the viral RNA replication complex that functions in virion assembly and antagonizes the host immune response.</text>
</comment>
<comment type="function">
    <molecule>Serine protease subunit NS2B</molecule>
    <text evidence="5 15">Required cofactor for the serine protease function of NS3. May have membrane-destabilizing activity and form viroporins (By similarity).</text>
</comment>
<comment type="function">
    <molecule>Serine protease NS3</molecule>
    <text evidence="16">Displays three enzymatic activities: serine protease, NTPase and RNA helicase. NS3 serine protease, in association with NS2B, performs its autocleavage and cleaves the polyprotein at dibasic sites in the cytoplasm: C-prM, NS2A-NS2B, NS2B-NS3, NS3-NS4A, NS4A-2K and NS4B-NS5. NS3 RNA helicase binds RNA and unwinds dsRNA in the 3' to 5' direction.</text>
</comment>
<comment type="function">
    <molecule>Non-structural protein 4A</molecule>
    <text evidence="9">Regulates the ATPase activity of the NS3 helicase activity. NS4A allows NS3 helicase to conserve energy during unwinding.</text>
</comment>
<comment type="function">
    <molecule>Peptide 2k</molecule>
    <text evidence="5">Functions as a signal peptide for NS4B and is required for the interferon antagonism activity of the latter.</text>
</comment>
<comment type="function">
    <molecule>Non-structural protein 4B</molecule>
    <text evidence="9">Induces the formation of ER-derived membrane vesicles where the viral replication takes place. Inhibits interferon (IFN)-induced host STAT1 phosphorylation and nuclear translocation, thereby preventing the establishment of cellular antiviral state by blocking the IFN-alpha/beta pathway. Inhibits STAT2 translocation in the nucleus after IFN-alpha treatment.</text>
</comment>
<comment type="function">
    <molecule>RNA-directed RNA polymerase NS5</molecule>
    <text evidence="5">Replicates the viral (+) and (-) RNA genome, and performs the capping of genomes in the cytoplasm. NS5 methylates viral RNA cap at guanine N-7 and ribose 2'-O positions. Besides its role in RNA genome replication, also prevents the establishment of cellular antiviral state by blocking the interferon-alpha/beta (IFN-alpha/beta) signaling pathway. Inhibits host TYK2 and STAT2 phosphorylation, thereby preventing activation of JAK-STAT signaling pathway.</text>
</comment>
<comment type="catalytic activity">
    <reaction>
        <text>Selective hydrolysis of -Xaa-Xaa-|-Yaa- bonds in which each of the Xaa can be either Arg or Lys and Yaa can be either Ser or Ala.</text>
        <dbReference type="EC" id="3.4.21.91"/>
    </reaction>
</comment>
<comment type="catalytic activity">
    <reaction evidence="12">
        <text>RNA(n) + a ribonucleoside 5'-triphosphate = RNA(n+1) + diphosphate</text>
        <dbReference type="Rhea" id="RHEA:21248"/>
        <dbReference type="Rhea" id="RHEA-COMP:14527"/>
        <dbReference type="Rhea" id="RHEA-COMP:17342"/>
        <dbReference type="ChEBI" id="CHEBI:33019"/>
        <dbReference type="ChEBI" id="CHEBI:61557"/>
        <dbReference type="ChEBI" id="CHEBI:140395"/>
        <dbReference type="EC" id="2.7.7.48"/>
    </reaction>
</comment>
<comment type="catalytic activity">
    <reaction>
        <text>a ribonucleoside 5'-triphosphate + H2O = a ribonucleoside 5'-diphosphate + phosphate + H(+)</text>
        <dbReference type="Rhea" id="RHEA:23680"/>
        <dbReference type="ChEBI" id="CHEBI:15377"/>
        <dbReference type="ChEBI" id="CHEBI:15378"/>
        <dbReference type="ChEBI" id="CHEBI:43474"/>
        <dbReference type="ChEBI" id="CHEBI:57930"/>
        <dbReference type="ChEBI" id="CHEBI:61557"/>
        <dbReference type="EC" id="3.6.1.15"/>
    </reaction>
</comment>
<comment type="catalytic activity">
    <reaction>
        <text>ATP + H2O = ADP + phosphate + H(+)</text>
        <dbReference type="Rhea" id="RHEA:13065"/>
        <dbReference type="ChEBI" id="CHEBI:15377"/>
        <dbReference type="ChEBI" id="CHEBI:15378"/>
        <dbReference type="ChEBI" id="CHEBI:30616"/>
        <dbReference type="ChEBI" id="CHEBI:43474"/>
        <dbReference type="ChEBI" id="CHEBI:456216"/>
        <dbReference type="EC" id="3.6.4.13"/>
    </reaction>
</comment>
<comment type="catalytic activity">
    <reaction evidence="17">
        <text>a 5'-end (5'-triphosphoguanosine)-ribonucleoside in mRNA + S-adenosyl-L-methionine = a 5'-end (N(7)-methyl 5'-triphosphoguanosine)-ribonucleoside in mRNA + S-adenosyl-L-homocysteine</text>
        <dbReference type="Rhea" id="RHEA:67008"/>
        <dbReference type="Rhea" id="RHEA-COMP:17166"/>
        <dbReference type="Rhea" id="RHEA-COMP:17167"/>
        <dbReference type="ChEBI" id="CHEBI:57856"/>
        <dbReference type="ChEBI" id="CHEBI:59789"/>
        <dbReference type="ChEBI" id="CHEBI:156461"/>
        <dbReference type="ChEBI" id="CHEBI:167617"/>
        <dbReference type="EC" id="2.1.1.56"/>
    </reaction>
</comment>
<comment type="catalytic activity">
    <reaction evidence="17">
        <text>a 5'-end (N(7)-methyl 5'-triphosphoguanosine)-ribonucleoside in mRNA + S-adenosyl-L-methionine = a 5'-end (N(7)-methyl 5'-triphosphoguanosine)-(2'-O-methyl-ribonucleoside) in mRNA + S-adenosyl-L-homocysteine + H(+)</text>
        <dbReference type="Rhea" id="RHEA:67020"/>
        <dbReference type="Rhea" id="RHEA-COMP:17167"/>
        <dbReference type="Rhea" id="RHEA-COMP:17168"/>
        <dbReference type="ChEBI" id="CHEBI:15378"/>
        <dbReference type="ChEBI" id="CHEBI:57856"/>
        <dbReference type="ChEBI" id="CHEBI:59789"/>
        <dbReference type="ChEBI" id="CHEBI:156461"/>
        <dbReference type="ChEBI" id="CHEBI:167609"/>
        <dbReference type="EC" id="2.1.1.57"/>
    </reaction>
</comment>
<comment type="subunit">
    <molecule>Capsid protein C</molecule>
    <text evidence="5">Homodimer (By similarity). Interacts (via N-terminus) with host EXOC1 (via C-terminus); this interaction results in EXOC1 degradation through the proteasome degradation pathway (By similarity).</text>
</comment>
<comment type="subunit">
    <molecule>Protein prM</molecule>
    <text evidence="5">Forms heterodimers with envelope protein E in the endoplasmic reticulum and Golgi.</text>
</comment>
<comment type="subunit">
    <molecule>Envelope protein E</molecule>
    <text evidence="5">Homodimer; in the endoplasmic reticulum and Golgi.</text>
</comment>
<comment type="subunit">
    <molecule>Non-structural protein 1</molecule>
    <text evidence="5">Forms homodimers as well as homohexamers. NS1 may interact with NS4A.</text>
</comment>
<comment type="subunit">
    <molecule>Serine protease subunit NS2B</molecule>
    <text evidence="5">Forms a heterodimer with serine protease NS3. May form homooligomers.</text>
</comment>
<comment type="subunit">
    <molecule>Serine protease NS3</molecule>
    <text evidence="5">Forms a heterodimer with NS2B. Interacts with NS4B. Interacts with unphosphorylated RNA-directed RNA polymerase NS5; this interaction stimulates RNA-directed RNA polymerase NS5 guanylyltransferase activity.</text>
</comment>
<comment type="subunit">
    <molecule>Non-structural protein 4B</molecule>
    <text evidence="5">Interacts with serine protease NS3.</text>
</comment>
<comment type="subunit">
    <molecule>RNA-directed RNA polymerase NS5</molecule>
    <text evidence="6">Interacts with host STAT2; this interaction inhibits the phosphorylation of the latter, and, when all viral proteins are present (polyprotein), targets STAT2 for degradation.</text>
</comment>
<comment type="subcellular location">
    <molecule>Capsid protein C</molecule>
    <subcellularLocation>
        <location evidence="5">Virion</location>
    </subcellularLocation>
    <subcellularLocation>
        <location evidence="5">Host nucleus</location>
    </subcellularLocation>
    <subcellularLocation>
        <location evidence="5">Host cytoplasm</location>
        <location evidence="5">Host perinuclear region</location>
    </subcellularLocation>
    <subcellularLocation>
        <location evidence="5">Host cytoplasm</location>
    </subcellularLocation>
</comment>
<comment type="subcellular location">
    <molecule>Peptide pr</molecule>
    <subcellularLocation>
        <location evidence="5">Secreted</location>
    </subcellularLocation>
</comment>
<comment type="subcellular location">
    <molecule>Small envelope protein M</molecule>
    <subcellularLocation>
        <location evidence="1">Virion membrane</location>
        <topology evidence="1">Multi-pass membrane protein</topology>
    </subcellularLocation>
    <subcellularLocation>
        <location evidence="1">Host endoplasmic reticulum membrane</location>
        <topology evidence="10">Multi-pass membrane protein</topology>
    </subcellularLocation>
    <text evidence="1">ER membrane retention is mediated by the transmembrane domains.</text>
</comment>
<comment type="subcellular location">
    <molecule>Envelope protein E</molecule>
    <subcellularLocation>
        <location evidence="19">Virion membrane</location>
        <topology evidence="1">Multi-pass membrane protein</topology>
    </subcellularLocation>
    <subcellularLocation>
        <location evidence="1">Host endoplasmic reticulum membrane</location>
        <topology evidence="10">Multi-pass membrane protein</topology>
    </subcellularLocation>
    <text evidence="1">ER membrane retention is mediated by the transmembrane domains.</text>
</comment>
<comment type="subcellular location">
    <molecule>Non-structural protein 1</molecule>
    <subcellularLocation>
        <location evidence="5">Secreted</location>
    </subcellularLocation>
    <subcellularLocation>
        <location>Host endoplasmic reticulum membrane</location>
        <topology>Peripheral membrane protein</topology>
        <orientation evidence="5">Lumenal side</orientation>
    </subcellularLocation>
    <text evidence="9">Located in RE-derived vesicles hosting the replication complex.</text>
</comment>
<comment type="subcellular location">
    <molecule>Non-structural protein 2A</molecule>
    <subcellularLocation>
        <location evidence="3">Host endoplasmic reticulum membrane</location>
        <topology evidence="5">Multi-pass membrane protein</topology>
    </subcellularLocation>
</comment>
<comment type="subcellular location">
    <molecule>Serine protease subunit NS2B</molecule>
    <subcellularLocation>
        <location>Host endoplasmic reticulum membrane</location>
        <topology evidence="5">Multi-pass membrane protein</topology>
    </subcellularLocation>
</comment>
<comment type="subcellular location">
    <molecule>Serine protease NS3</molecule>
    <subcellularLocation>
        <location evidence="16">Host endoplasmic reticulum membrane</location>
        <topology evidence="16">Peripheral membrane protein</topology>
        <orientation evidence="16">Cytoplasmic side</orientation>
    </subcellularLocation>
    <text evidence="16">Remains non-covalently associated to serine protease subunit NS2B.</text>
</comment>
<comment type="subcellular location">
    <molecule>Non-structural protein 4A</molecule>
    <subcellularLocation>
        <location evidence="3">Host endoplasmic reticulum membrane</location>
        <topology evidence="5">Multi-pass membrane protein</topology>
    </subcellularLocation>
    <text evidence="5">Located in RE-associated vesicles hosting the replication complex.</text>
</comment>
<comment type="subcellular location">
    <molecule>Non-structural protein 4B</molecule>
    <subcellularLocation>
        <location evidence="5">Host endoplasmic reticulum membrane</location>
        <topology evidence="5">Multi-pass membrane protein</topology>
    </subcellularLocation>
    <text evidence="9">Located in RE-derived vesicles hosting the replication complex.</text>
</comment>
<comment type="subcellular location">
    <molecule>RNA-directed RNA polymerase NS5</molecule>
    <subcellularLocation>
        <location>Host endoplasmic reticulum membrane</location>
        <topology>Peripheral membrane protein</topology>
        <orientation>Cytoplasmic side</orientation>
    </subcellularLocation>
    <subcellularLocation>
        <location evidence="2">Host nucleus</location>
    </subcellularLocation>
    <text evidence="5">Located in RE-associated vesicles hosting the replication complex. NS5 protein is mainly localized in the nucleus rather than in ER vesicles.</text>
</comment>
<comment type="domain">
    <text evidence="5">The transmembrane domains of the small envelope protein M and envelope protein E contain an endoplasmic reticulum retention signal.</text>
</comment>
<comment type="PTM">
    <molecule>Genome polyprotein</molecule>
    <text evidence="5">Specific enzymatic cleavages in vivo yield mature proteins. Cleavages in the lumen of endoplasmic reticulum are performed by host signal peptidase, whereas cleavages in the cytoplasmic side are performed by serine protease NS3. Signal cleavage at the 2K-4B site requires a prior NS3 protease-mediated cleavage at the 4A-2K site.</text>
</comment>
<comment type="PTM">
    <molecule>Protein prM</molecule>
    <text evidence="5">Cleaved in post-Golgi vesicles by a host furin, releasing the mature small envelope protein M, and peptide pr. This cleavage is incomplete as up to 30% of viral particles still carry uncleaved prM.</text>
</comment>
<comment type="PTM">
    <molecule>Envelope protein E</molecule>
    <text evidence="5">N-glycosylated.</text>
</comment>
<comment type="PTM">
    <molecule>Non-structural protein 1</molecule>
    <text evidence="5">N-glycosylated. The excreted form is glycosylated and this is required for efficient secretion of the protein from infected cells.</text>
</comment>
<comment type="PTM">
    <molecule>Serine protease NS3</molecule>
    <text evidence="7">Acetylated by host KAT5. Acetylation modulates NS3 RNA-binding and unwinding activities and plays an important positive role for viral replication.</text>
</comment>
<comment type="PTM">
    <molecule>RNA-directed RNA polymerase NS5</molecule>
    <text evidence="5">Phosphorylated on serines residues. This phosphorylation may trigger NS5 nuclear localization.</text>
</comment>
<comment type="similarity">
    <text evidence="17">In the N-terminal section; belongs to the class I-like SAM-binding methyltransferase superfamily. mRNA cap 0-1 NS5-type methyltransferase family.</text>
</comment>
<proteinExistence type="evidence at protein level"/>
<dbReference type="EC" id="3.4.21.91"/>
<dbReference type="EC" id="3.6.1.15"/>
<dbReference type="EC" id="3.6.4.13"/>
<dbReference type="EC" id="2.1.1.56" evidence="17"/>
<dbReference type="EC" id="2.1.1.57" evidence="17"/>
<dbReference type="EC" id="2.7.7.48" evidence="12"/>
<dbReference type="EMBL" id="L06436">
    <property type="protein sequence ID" value="AAA02739.1"/>
    <property type="molecule type" value="Genomic_RNA"/>
</dbReference>
<dbReference type="PIR" id="A46105">
    <property type="entry name" value="A46105"/>
</dbReference>
<dbReference type="RefSeq" id="NP_620099.1">
    <property type="nucleotide sequence ID" value="NC_003687.1"/>
</dbReference>
<dbReference type="PDB" id="7SGT">
    <property type="method" value="NMR"/>
    <property type="chains" value="A=581-680"/>
</dbReference>
<dbReference type="PDBsum" id="7SGT"/>
<dbReference type="SMR" id="Q04538"/>
<dbReference type="GeneID" id="940442"/>
<dbReference type="KEGG" id="vg:940442"/>
<dbReference type="Proteomes" id="UP000006848">
    <property type="component" value="Segment"/>
</dbReference>
<dbReference type="GO" id="GO:0005576">
    <property type="term" value="C:extracellular region"/>
    <property type="evidence" value="ECO:0007669"/>
    <property type="project" value="UniProtKB-SubCell"/>
</dbReference>
<dbReference type="GO" id="GO:0044167">
    <property type="term" value="C:host cell endoplasmic reticulum membrane"/>
    <property type="evidence" value="ECO:0007669"/>
    <property type="project" value="UniProtKB-SubCell"/>
</dbReference>
<dbReference type="GO" id="GO:0042025">
    <property type="term" value="C:host cell nucleus"/>
    <property type="evidence" value="ECO:0007669"/>
    <property type="project" value="UniProtKB-SubCell"/>
</dbReference>
<dbReference type="GO" id="GO:0044220">
    <property type="term" value="C:host cell perinuclear region of cytoplasm"/>
    <property type="evidence" value="ECO:0007669"/>
    <property type="project" value="UniProtKB-SubCell"/>
</dbReference>
<dbReference type="GO" id="GO:0016020">
    <property type="term" value="C:membrane"/>
    <property type="evidence" value="ECO:0007669"/>
    <property type="project" value="UniProtKB-KW"/>
</dbReference>
<dbReference type="GO" id="GO:0019028">
    <property type="term" value="C:viral capsid"/>
    <property type="evidence" value="ECO:0007669"/>
    <property type="project" value="UniProtKB-KW"/>
</dbReference>
<dbReference type="GO" id="GO:0019031">
    <property type="term" value="C:viral envelope"/>
    <property type="evidence" value="ECO:0007669"/>
    <property type="project" value="UniProtKB-KW"/>
</dbReference>
<dbReference type="GO" id="GO:0055036">
    <property type="term" value="C:virion membrane"/>
    <property type="evidence" value="ECO:0007669"/>
    <property type="project" value="UniProtKB-SubCell"/>
</dbReference>
<dbReference type="GO" id="GO:0005524">
    <property type="term" value="F:ATP binding"/>
    <property type="evidence" value="ECO:0007669"/>
    <property type="project" value="UniProtKB-KW"/>
</dbReference>
<dbReference type="GO" id="GO:0016887">
    <property type="term" value="F:ATP hydrolysis activity"/>
    <property type="evidence" value="ECO:0007669"/>
    <property type="project" value="RHEA"/>
</dbReference>
<dbReference type="GO" id="GO:0003725">
    <property type="term" value="F:double-stranded RNA binding"/>
    <property type="evidence" value="ECO:0007669"/>
    <property type="project" value="InterPro"/>
</dbReference>
<dbReference type="GO" id="GO:0046872">
    <property type="term" value="F:metal ion binding"/>
    <property type="evidence" value="ECO:0007669"/>
    <property type="project" value="UniProtKB-KW"/>
</dbReference>
<dbReference type="GO" id="GO:0004483">
    <property type="term" value="F:mRNA (nucleoside-2'-O-)-methyltransferase activity"/>
    <property type="evidence" value="ECO:0007669"/>
    <property type="project" value="UniProtKB-EC"/>
</dbReference>
<dbReference type="GO" id="GO:0004482">
    <property type="term" value="F:mRNA 5'-cap (guanine-N7-)-methyltransferase activity"/>
    <property type="evidence" value="ECO:0007669"/>
    <property type="project" value="UniProtKB-EC"/>
</dbReference>
<dbReference type="GO" id="GO:0046983">
    <property type="term" value="F:protein dimerization activity"/>
    <property type="evidence" value="ECO:0007669"/>
    <property type="project" value="InterPro"/>
</dbReference>
<dbReference type="GO" id="GO:0003724">
    <property type="term" value="F:RNA helicase activity"/>
    <property type="evidence" value="ECO:0007669"/>
    <property type="project" value="UniProtKB-EC"/>
</dbReference>
<dbReference type="GO" id="GO:0003968">
    <property type="term" value="F:RNA-directed RNA polymerase activity"/>
    <property type="evidence" value="ECO:0007669"/>
    <property type="project" value="UniProtKB-KW"/>
</dbReference>
<dbReference type="GO" id="GO:0004252">
    <property type="term" value="F:serine-type endopeptidase activity"/>
    <property type="evidence" value="ECO:0007669"/>
    <property type="project" value="InterPro"/>
</dbReference>
<dbReference type="GO" id="GO:0005198">
    <property type="term" value="F:structural molecule activity"/>
    <property type="evidence" value="ECO:0007669"/>
    <property type="project" value="InterPro"/>
</dbReference>
<dbReference type="GO" id="GO:0075512">
    <property type="term" value="P:clathrin-dependent endocytosis of virus by host cell"/>
    <property type="evidence" value="ECO:0007669"/>
    <property type="project" value="UniProtKB-KW"/>
</dbReference>
<dbReference type="GO" id="GO:0039654">
    <property type="term" value="P:fusion of virus membrane with host endosome membrane"/>
    <property type="evidence" value="ECO:0007669"/>
    <property type="project" value="UniProtKB-KW"/>
</dbReference>
<dbReference type="GO" id="GO:0006508">
    <property type="term" value="P:proteolysis"/>
    <property type="evidence" value="ECO:0007669"/>
    <property type="project" value="UniProtKB-KW"/>
</dbReference>
<dbReference type="GO" id="GO:0039520">
    <property type="term" value="P:symbiont-mediated activation of host autophagy"/>
    <property type="evidence" value="ECO:0007669"/>
    <property type="project" value="UniProtKB-KW"/>
</dbReference>
<dbReference type="GO" id="GO:0052170">
    <property type="term" value="P:symbiont-mediated suppression of host innate immune response"/>
    <property type="evidence" value="ECO:0007669"/>
    <property type="project" value="UniProtKB-KW"/>
</dbReference>
<dbReference type="GO" id="GO:0039563">
    <property type="term" value="P:symbiont-mediated suppression of host JAK-STAT cascade via inhibition of STAT1 activity"/>
    <property type="evidence" value="ECO:0007669"/>
    <property type="project" value="UniProtKB-KW"/>
</dbReference>
<dbReference type="GO" id="GO:0039564">
    <property type="term" value="P:symbiont-mediated suppression of host JAK-STAT cascade via inhibition of STAT2 activity"/>
    <property type="evidence" value="ECO:0007669"/>
    <property type="project" value="UniProtKB-KW"/>
</dbReference>
<dbReference type="GO" id="GO:0039502">
    <property type="term" value="P:symbiont-mediated suppression of host type I interferon-mediated signaling pathway"/>
    <property type="evidence" value="ECO:0007669"/>
    <property type="project" value="UniProtKB-KW"/>
</dbReference>
<dbReference type="GO" id="GO:0039694">
    <property type="term" value="P:viral RNA genome replication"/>
    <property type="evidence" value="ECO:0007669"/>
    <property type="project" value="InterPro"/>
</dbReference>
<dbReference type="GO" id="GO:0019062">
    <property type="term" value="P:virion attachment to host cell"/>
    <property type="evidence" value="ECO:0007669"/>
    <property type="project" value="UniProtKB-KW"/>
</dbReference>
<dbReference type="CDD" id="cd20761">
    <property type="entry name" value="capping_2-OMTase_Flaviviridae"/>
    <property type="match status" value="1"/>
</dbReference>
<dbReference type="CDD" id="cd12149">
    <property type="entry name" value="Flavi_E_C"/>
    <property type="match status" value="1"/>
</dbReference>
<dbReference type="CDD" id="cd17038">
    <property type="entry name" value="Flavi_M"/>
    <property type="match status" value="1"/>
</dbReference>
<dbReference type="CDD" id="cd23204">
    <property type="entry name" value="Flavivirus_RdRp"/>
    <property type="match status" value="1"/>
</dbReference>
<dbReference type="FunFam" id="1.20.1280.260:FF:000001">
    <property type="entry name" value="Envelope glycoprotein"/>
    <property type="match status" value="1"/>
</dbReference>
<dbReference type="FunFam" id="3.30.70.2840:FF:000004">
    <property type="entry name" value="Genome polyprotein"/>
    <property type="match status" value="1"/>
</dbReference>
<dbReference type="Gene3D" id="1.10.260.90">
    <property type="match status" value="1"/>
</dbReference>
<dbReference type="Gene3D" id="1.20.1280.260">
    <property type="match status" value="1"/>
</dbReference>
<dbReference type="Gene3D" id="2.40.10.120">
    <property type="match status" value="1"/>
</dbReference>
<dbReference type="Gene3D" id="2.60.40.350">
    <property type="match status" value="1"/>
</dbReference>
<dbReference type="Gene3D" id="1.10.8.970">
    <property type="entry name" value="Flavivirus envelope glycoprotein M-like"/>
    <property type="match status" value="1"/>
</dbReference>
<dbReference type="Gene3D" id="2.60.260.50">
    <property type="entry name" value="Flavivirus polyprotein propeptide domain"/>
    <property type="match status" value="1"/>
</dbReference>
<dbReference type="Gene3D" id="3.30.70.2840">
    <property type="entry name" value="Flavivirus RNA-directed RNA polymerase, thumb domain"/>
    <property type="match status" value="3"/>
</dbReference>
<dbReference type="Gene3D" id="3.40.50.300">
    <property type="entry name" value="P-loop containing nucleotide triphosphate hydrolases"/>
    <property type="match status" value="2"/>
</dbReference>
<dbReference type="Gene3D" id="2.60.98.10">
    <property type="entry name" value="Tick-borne Encephalitis virus Glycoprotein, domain 1"/>
    <property type="match status" value="1"/>
</dbReference>
<dbReference type="Gene3D" id="3.40.50.150">
    <property type="entry name" value="Vaccinia Virus protein VP39"/>
    <property type="match status" value="1"/>
</dbReference>
<dbReference type="Gene3D" id="3.30.67.10">
    <property type="entry name" value="Viral Envelope Glycoprotein, domain 2"/>
    <property type="match status" value="1"/>
</dbReference>
<dbReference type="Gene3D" id="3.30.387.10">
    <property type="entry name" value="Viral Envelope Glycoprotein, domain 3"/>
    <property type="match status" value="1"/>
</dbReference>
<dbReference type="InterPro" id="IPR043502">
    <property type="entry name" value="DNA/RNA_pol_sf"/>
</dbReference>
<dbReference type="InterPro" id="IPR000069">
    <property type="entry name" value="Env_glycoprot_M_flavivir"/>
</dbReference>
<dbReference type="InterPro" id="IPR038302">
    <property type="entry name" value="Env_glycoprot_M_sf_flavivir"/>
</dbReference>
<dbReference type="InterPro" id="IPR013755">
    <property type="entry name" value="Flav_gly_cen_dom_subdom1"/>
</dbReference>
<dbReference type="InterPro" id="IPR001122">
    <property type="entry name" value="Flavi_capsidC"/>
</dbReference>
<dbReference type="InterPro" id="IPR011492">
    <property type="entry name" value="Flavi_DEAD"/>
</dbReference>
<dbReference type="InterPro" id="IPR027287">
    <property type="entry name" value="Flavi_E_Ig-like"/>
</dbReference>
<dbReference type="InterPro" id="IPR026470">
    <property type="entry name" value="Flavi_E_Stem/Anchor_dom"/>
</dbReference>
<dbReference type="InterPro" id="IPR038345">
    <property type="entry name" value="Flavi_E_Stem/Anchor_dom_sf"/>
</dbReference>
<dbReference type="InterPro" id="IPR011998">
    <property type="entry name" value="Flavi_Glycoprot_E_cen/dimer"/>
</dbReference>
<dbReference type="InterPro" id="IPR001157">
    <property type="entry name" value="Flavi_NS1"/>
</dbReference>
<dbReference type="InterPro" id="IPR000752">
    <property type="entry name" value="Flavi_NS2A"/>
</dbReference>
<dbReference type="InterPro" id="IPR000487">
    <property type="entry name" value="Flavi_NS2B"/>
</dbReference>
<dbReference type="InterPro" id="IPR001850">
    <property type="entry name" value="Flavi_NS3_S7"/>
</dbReference>
<dbReference type="InterPro" id="IPR000404">
    <property type="entry name" value="Flavi_NS4A"/>
</dbReference>
<dbReference type="InterPro" id="IPR001528">
    <property type="entry name" value="Flavi_NS4B"/>
</dbReference>
<dbReference type="InterPro" id="IPR046811">
    <property type="entry name" value="Flavi_NS5_thumb"/>
</dbReference>
<dbReference type="InterPro" id="IPR002535">
    <property type="entry name" value="Flavi_propep"/>
</dbReference>
<dbReference type="InterPro" id="IPR038688">
    <property type="entry name" value="Flavi_propep_sf"/>
</dbReference>
<dbReference type="InterPro" id="IPR047530">
    <property type="entry name" value="Flavi_RdRp"/>
</dbReference>
<dbReference type="InterPro" id="IPR000208">
    <property type="entry name" value="Flavi_RdRp_fingers/palm"/>
</dbReference>
<dbReference type="InterPro" id="IPR000336">
    <property type="entry name" value="Flavivir/Alphavir_Ig-like_sf"/>
</dbReference>
<dbReference type="InterPro" id="IPR014412">
    <property type="entry name" value="Gen_Poly_FLV"/>
</dbReference>
<dbReference type="InterPro" id="IPR036253">
    <property type="entry name" value="Glycoprot_cen/dimer_sf"/>
</dbReference>
<dbReference type="InterPro" id="IPR038055">
    <property type="entry name" value="Glycoprot_E_dimer_dom"/>
</dbReference>
<dbReference type="InterPro" id="IPR013756">
    <property type="entry name" value="GlyE_cen_dom_subdom2"/>
</dbReference>
<dbReference type="InterPro" id="IPR014001">
    <property type="entry name" value="Helicase_ATP-bd"/>
</dbReference>
<dbReference type="InterPro" id="IPR001650">
    <property type="entry name" value="Helicase_C-like"/>
</dbReference>
<dbReference type="InterPro" id="IPR014756">
    <property type="entry name" value="Ig_E-set"/>
</dbReference>
<dbReference type="InterPro" id="IPR026490">
    <property type="entry name" value="mRNA_cap_0/1_MeTrfase"/>
</dbReference>
<dbReference type="InterPro" id="IPR049486">
    <property type="entry name" value="NS3-hel_C_flaviviridae"/>
</dbReference>
<dbReference type="InterPro" id="IPR027417">
    <property type="entry name" value="P-loop_NTPase"/>
</dbReference>
<dbReference type="InterPro" id="IPR009003">
    <property type="entry name" value="Peptidase_S1_PA"/>
</dbReference>
<dbReference type="InterPro" id="IPR007094">
    <property type="entry name" value="RNA-dir_pol_PSvirus"/>
</dbReference>
<dbReference type="InterPro" id="IPR002877">
    <property type="entry name" value="RNA_MeTrfase_FtsJ_dom"/>
</dbReference>
<dbReference type="InterPro" id="IPR029063">
    <property type="entry name" value="SAM-dependent_MTases_sf"/>
</dbReference>
<dbReference type="NCBIfam" id="TIGR04240">
    <property type="entry name" value="flavi_E_stem"/>
    <property type="match status" value="1"/>
</dbReference>
<dbReference type="Pfam" id="PF20907">
    <property type="entry name" value="Flav_NS3-hel_C"/>
    <property type="match status" value="1"/>
</dbReference>
<dbReference type="Pfam" id="PF01003">
    <property type="entry name" value="Flavi_capsid"/>
    <property type="match status" value="1"/>
</dbReference>
<dbReference type="Pfam" id="PF07652">
    <property type="entry name" value="Flavi_DEAD"/>
    <property type="match status" value="1"/>
</dbReference>
<dbReference type="Pfam" id="PF21659">
    <property type="entry name" value="Flavi_E_stem"/>
    <property type="match status" value="1"/>
</dbReference>
<dbReference type="Pfam" id="PF02832">
    <property type="entry name" value="Flavi_glycop_C"/>
    <property type="match status" value="1"/>
</dbReference>
<dbReference type="Pfam" id="PF00869">
    <property type="entry name" value="Flavi_glycoprot"/>
    <property type="match status" value="1"/>
</dbReference>
<dbReference type="Pfam" id="PF01004">
    <property type="entry name" value="Flavi_M"/>
    <property type="match status" value="1"/>
</dbReference>
<dbReference type="Pfam" id="PF00948">
    <property type="entry name" value="Flavi_NS1"/>
    <property type="match status" value="1"/>
</dbReference>
<dbReference type="Pfam" id="PF01005">
    <property type="entry name" value="Flavi_NS2A"/>
    <property type="match status" value="1"/>
</dbReference>
<dbReference type="Pfam" id="PF01350">
    <property type="entry name" value="Flavi_NS4A"/>
    <property type="match status" value="1"/>
</dbReference>
<dbReference type="Pfam" id="PF01349">
    <property type="entry name" value="Flavi_NS4B"/>
    <property type="match status" value="1"/>
</dbReference>
<dbReference type="Pfam" id="PF00972">
    <property type="entry name" value="Flavi_NS5"/>
    <property type="match status" value="1"/>
</dbReference>
<dbReference type="Pfam" id="PF20483">
    <property type="entry name" value="Flavi_NS5_thumb"/>
    <property type="match status" value="1"/>
</dbReference>
<dbReference type="Pfam" id="PF01570">
    <property type="entry name" value="Flavi_propep"/>
    <property type="match status" value="1"/>
</dbReference>
<dbReference type="Pfam" id="PF01728">
    <property type="entry name" value="FtsJ"/>
    <property type="match status" value="1"/>
</dbReference>
<dbReference type="Pfam" id="PF00949">
    <property type="entry name" value="Peptidase_S7"/>
    <property type="match status" value="1"/>
</dbReference>
<dbReference type="PIRSF" id="PIRSF003817">
    <property type="entry name" value="Gen_Poly_FLV"/>
    <property type="match status" value="1"/>
</dbReference>
<dbReference type="SMART" id="SM00487">
    <property type="entry name" value="DEXDc"/>
    <property type="match status" value="1"/>
</dbReference>
<dbReference type="SMART" id="SM00490">
    <property type="entry name" value="HELICc"/>
    <property type="match status" value="1"/>
</dbReference>
<dbReference type="SUPFAM" id="SSF56672">
    <property type="entry name" value="DNA/RNA polymerases"/>
    <property type="match status" value="1"/>
</dbReference>
<dbReference type="SUPFAM" id="SSF81296">
    <property type="entry name" value="E set domains"/>
    <property type="match status" value="1"/>
</dbReference>
<dbReference type="SUPFAM" id="SSF52540">
    <property type="entry name" value="P-loop containing nucleoside triphosphate hydrolases"/>
    <property type="match status" value="2"/>
</dbReference>
<dbReference type="SUPFAM" id="SSF53335">
    <property type="entry name" value="S-adenosyl-L-methionine-dependent methyltransferases"/>
    <property type="match status" value="1"/>
</dbReference>
<dbReference type="SUPFAM" id="SSF50494">
    <property type="entry name" value="Trypsin-like serine proteases"/>
    <property type="match status" value="1"/>
</dbReference>
<dbReference type="SUPFAM" id="SSF56983">
    <property type="entry name" value="Viral glycoprotein, central and dimerisation domains"/>
    <property type="match status" value="1"/>
</dbReference>
<dbReference type="PROSITE" id="PS51527">
    <property type="entry name" value="FLAVIVIRUS_NS2B"/>
    <property type="match status" value="1"/>
</dbReference>
<dbReference type="PROSITE" id="PS51528">
    <property type="entry name" value="FLAVIVIRUS_NS3PRO"/>
    <property type="match status" value="1"/>
</dbReference>
<dbReference type="PROSITE" id="PS51192">
    <property type="entry name" value="HELICASE_ATP_BIND_1"/>
    <property type="match status" value="1"/>
</dbReference>
<dbReference type="PROSITE" id="PS51194">
    <property type="entry name" value="HELICASE_CTER"/>
    <property type="match status" value="1"/>
</dbReference>
<dbReference type="PROSITE" id="PS50507">
    <property type="entry name" value="RDRP_SSRNA_POS"/>
    <property type="match status" value="1"/>
</dbReference>
<dbReference type="PROSITE" id="PS51591">
    <property type="entry name" value="RNA_CAP01_NS5_MT"/>
    <property type="match status" value="1"/>
</dbReference>
<organism>
    <name type="scientific">Tick-borne powassan virus (strain LB)</name>
    <name type="common">POWV</name>
    <name type="synonym">Powassan virus</name>
    <dbReference type="NCBI Taxonomy" id="39008"/>
    <lineage>
        <taxon>Viruses</taxon>
        <taxon>Riboviria</taxon>
        <taxon>Orthornavirae</taxon>
        <taxon>Kitrinoviricota</taxon>
        <taxon>Flasuviricetes</taxon>
        <taxon>Amarillovirales</taxon>
        <taxon>Flaviviridae</taxon>
        <taxon>Orthoflavivirus</taxon>
        <taxon>Orthoflavivirus powassanense</taxon>
    </lineage>
</organism>
<feature type="chain" id="PRO_0000037724" description="Genome polyprotein">
    <location>
        <begin position="1"/>
        <end position="3415"/>
    </location>
</feature>
<feature type="chain" id="PRO_0000405239" description="Capsid protein C" evidence="1">
    <location>
        <begin position="1"/>
        <end position="94"/>
    </location>
</feature>
<feature type="propeptide" id="PRO_0000405140" description="ER anchor for the capsid protein C, removed in mature form by serine protease NS3" evidence="1">
    <location>
        <begin position="95"/>
        <end position="115"/>
    </location>
</feature>
<feature type="chain" id="PRO_0000405141" description="Protein prM" evidence="2">
    <location>
        <begin position="116"/>
        <end position="278"/>
    </location>
</feature>
<feature type="chain" id="PRO_0000037725" description="Peptide pr" evidence="2">
    <location>
        <begin position="116"/>
        <end position="203"/>
    </location>
</feature>
<feature type="chain" id="PRO_0000037726" description="Small envelope protein M" evidence="2">
    <location>
        <begin position="204"/>
        <end position="278"/>
    </location>
</feature>
<feature type="chain" id="PRO_0000037727" description="Envelope protein E" evidence="2">
    <location>
        <begin position="279"/>
        <end position="775"/>
    </location>
</feature>
<feature type="chain" id="PRO_0000037728" description="Non-structural protein 1" evidence="1">
    <location>
        <begin position="776"/>
        <end position="1128"/>
    </location>
</feature>
<feature type="chain" id="PRO_0000037729" description="Non-structural protein 2A" evidence="2">
    <location>
        <begin position="1129"/>
        <end position="1358"/>
    </location>
</feature>
<feature type="chain" id="PRO_0000037730" description="Serine protease subunit NS2B" evidence="1">
    <location>
        <begin position="1359"/>
        <end position="1489"/>
    </location>
</feature>
<feature type="chain" id="PRO_0000037731" description="Serine protease NS3" evidence="1">
    <location>
        <begin position="1490"/>
        <end position="2111"/>
    </location>
</feature>
<feature type="chain" id="PRO_0000037732" description="Non-structural protein 4A" evidence="1">
    <location>
        <begin position="2112"/>
        <end position="2237"/>
    </location>
</feature>
<feature type="peptide" id="PRO_0000405142" description="Peptide 2k" evidence="1">
    <location>
        <begin position="2238"/>
        <end position="2260"/>
    </location>
</feature>
<feature type="chain" id="PRO_0000037733" description="Non-structural protein 4B" evidence="1">
    <location>
        <begin position="2261"/>
        <end position="2512"/>
    </location>
</feature>
<feature type="chain" id="PRO_0000037734" description="RNA-directed RNA polymerase NS5" evidence="1">
    <location>
        <begin position="2513"/>
        <end position="3415"/>
    </location>
</feature>
<feature type="topological domain" description="Cytoplasmic" evidence="10">
    <location>
        <begin position="1"/>
        <end position="96"/>
    </location>
</feature>
<feature type="transmembrane region" description="Helical" evidence="10">
    <location>
        <begin position="97"/>
        <end position="117"/>
    </location>
</feature>
<feature type="topological domain" description="Extracellular" evidence="10">
    <location>
        <begin position="118"/>
        <end position="243"/>
    </location>
</feature>
<feature type="transmembrane region" description="Helical" evidence="10">
    <location>
        <begin position="244"/>
        <end position="260"/>
    </location>
</feature>
<feature type="topological domain" description="Cytoplasmic" evidence="10">
    <location>
        <position position="261"/>
    </location>
</feature>
<feature type="transmembrane region" description="Helical" evidence="10">
    <location>
        <begin position="262"/>
        <end position="278"/>
    </location>
</feature>
<feature type="topological domain" description="Extracellular" evidence="10">
    <location>
        <begin position="279"/>
        <end position="726"/>
    </location>
</feature>
<feature type="transmembrane region" description="Helical" evidence="10">
    <location>
        <begin position="727"/>
        <end position="747"/>
    </location>
</feature>
<feature type="topological domain" description="Cytoplasmic" evidence="10">
    <location>
        <begin position="748"/>
        <end position="754"/>
    </location>
</feature>
<feature type="transmembrane region" description="Helical" evidence="10">
    <location>
        <begin position="755"/>
        <end position="775"/>
    </location>
</feature>
<feature type="topological domain" description="Extracellular" evidence="10">
    <location>
        <begin position="776"/>
        <end position="1187"/>
    </location>
</feature>
<feature type="transmembrane region" description="Helical" evidence="5 10">
    <location>
        <begin position="1188"/>
        <end position="1208"/>
    </location>
</feature>
<feature type="topological domain" description="Cytoplasmic" evidence="5 10">
    <location>
        <begin position="1209"/>
        <end position="1233"/>
    </location>
</feature>
<feature type="transmembrane region" description="Helical" evidence="5 10">
    <location>
        <begin position="1234"/>
        <end position="1253"/>
    </location>
</feature>
<feature type="topological domain" description="Lumenal" evidence="5 10">
    <location>
        <position position="1254"/>
    </location>
</feature>
<feature type="transmembrane region" description="Helical" evidence="5 10">
    <location>
        <begin position="1255"/>
        <end position="1275"/>
    </location>
</feature>
<feature type="topological domain" description="Cytoplasmic" evidence="5 10">
    <location>
        <begin position="1276"/>
        <end position="1292"/>
    </location>
</feature>
<feature type="transmembrane region" description="Helical" evidence="5 10">
    <location>
        <begin position="1293"/>
        <end position="1313"/>
    </location>
</feature>
<feature type="topological domain" description="Lumenal" evidence="5 10">
    <location>
        <begin position="1314"/>
        <end position="1327"/>
    </location>
</feature>
<feature type="transmembrane region" description="Helical" evidence="5 10">
    <location>
        <begin position="1328"/>
        <end position="1348"/>
    </location>
</feature>
<feature type="topological domain" description="Cytoplasmic" evidence="5 10">
    <location>
        <begin position="1349"/>
        <end position="1359"/>
    </location>
</feature>
<feature type="transmembrane region" description="Helical" evidence="10">
    <location>
        <begin position="1360"/>
        <end position="1378"/>
    </location>
</feature>
<feature type="topological domain" description="Lumenal" evidence="10">
    <location>
        <begin position="1379"/>
        <end position="1382"/>
    </location>
</feature>
<feature type="transmembrane region" description="Helical" evidence="10">
    <location>
        <begin position="1383"/>
        <end position="1403"/>
    </location>
</feature>
<feature type="topological domain" description="Cytoplasmic" evidence="10">
    <location>
        <begin position="1404"/>
        <end position="1452"/>
    </location>
</feature>
<feature type="intramembrane region" description="Helical" evidence="10">
    <location>
        <begin position="1453"/>
        <end position="1473"/>
    </location>
</feature>
<feature type="topological domain" description="Cytoplasmic" evidence="10">
    <location>
        <begin position="1474"/>
        <end position="2163"/>
    </location>
</feature>
<feature type="transmembrane region" description="Helical" evidence="10">
    <location>
        <begin position="2164"/>
        <end position="2184"/>
    </location>
</feature>
<feature type="topological domain" description="Lumenal" evidence="10">
    <location>
        <begin position="2185"/>
        <end position="2190"/>
    </location>
</feature>
<feature type="intramembrane region" description="Helical" evidence="10">
    <location>
        <begin position="2191"/>
        <end position="2210"/>
    </location>
</feature>
<feature type="topological domain" description="Lumenal" evidence="10">
    <location>
        <position position="2211"/>
    </location>
</feature>
<feature type="transmembrane region" description="Helical" evidence="10">
    <location>
        <begin position="2212"/>
        <end position="2232"/>
    </location>
</feature>
<feature type="topological domain" description="Cytoplasmic" evidence="10">
    <location>
        <begin position="2233"/>
        <end position="2243"/>
    </location>
</feature>
<feature type="transmembrane region" description="Helical; Note=Signal for NS4B" evidence="10">
    <location>
        <begin position="2244"/>
        <end position="2264"/>
    </location>
</feature>
<feature type="topological domain" description="Lumenal" evidence="10">
    <location>
        <begin position="2265"/>
        <end position="2300"/>
    </location>
</feature>
<feature type="intramembrane region" description="Helical" evidence="10">
    <location>
        <begin position="2301"/>
        <end position="2321"/>
    </location>
</feature>
<feature type="topological domain" description="Lumenal" evidence="10">
    <location>
        <begin position="2322"/>
        <end position="2344"/>
    </location>
</feature>
<feature type="intramembrane region" description="Helical" evidence="10">
    <location>
        <begin position="2345"/>
        <end position="2365"/>
    </location>
</feature>
<feature type="topological domain" description="Lumenal" evidence="10">
    <location>
        <begin position="2366"/>
        <end position="2369"/>
    </location>
</feature>
<feature type="transmembrane region" description="Helical" evidence="10">
    <location>
        <begin position="2370"/>
        <end position="2390"/>
    </location>
</feature>
<feature type="topological domain" description="Cytoplasmic" evidence="10">
    <location>
        <begin position="2391"/>
        <end position="2433"/>
    </location>
</feature>
<feature type="transmembrane region" description="Helical" evidence="10">
    <location>
        <begin position="2434"/>
        <end position="2454"/>
    </location>
</feature>
<feature type="topological domain" description="Lumenal" evidence="10">
    <location>
        <begin position="2455"/>
        <end position="2479"/>
    </location>
</feature>
<feature type="transmembrane region" description="Helical" evidence="10">
    <location>
        <begin position="2480"/>
        <end position="2500"/>
    </location>
</feature>
<feature type="topological domain" description="Cytoplasmic" evidence="10">
    <location>
        <begin position="2501"/>
        <end position="3415"/>
    </location>
</feature>
<feature type="domain" description="Peptidase S7" evidence="16">
    <location>
        <begin position="1490"/>
        <end position="1669"/>
    </location>
</feature>
<feature type="domain" description="Helicase ATP-binding" evidence="13">
    <location>
        <begin position="1675"/>
        <end position="1832"/>
    </location>
</feature>
<feature type="domain" description="Helicase C-terminal" evidence="14">
    <location>
        <begin position="1842"/>
        <end position="2001"/>
    </location>
</feature>
<feature type="domain" description="mRNA cap 0-1 NS5-type MT" evidence="17">
    <location>
        <begin position="2513"/>
        <end position="2777"/>
    </location>
</feature>
<feature type="domain" description="RdRp catalytic" evidence="12">
    <location>
        <begin position="3041"/>
        <end position="3190"/>
    </location>
</feature>
<feature type="region of interest" description="Disordered" evidence="18">
    <location>
        <begin position="1"/>
        <end position="29"/>
    </location>
</feature>
<feature type="region of interest" description="Fusion peptide" evidence="4">
    <location>
        <begin position="376"/>
        <end position="389"/>
    </location>
</feature>
<feature type="region of interest" description="Interacts with and activates NS3 protease" evidence="15">
    <location>
        <begin position="1410"/>
        <end position="1449"/>
    </location>
</feature>
<feature type="region of interest" description="Interaction with host SCRIB" evidence="6">
    <location>
        <begin position="2731"/>
        <end position="2735"/>
    </location>
</feature>
<feature type="short sequence motif" description="DEAH box" evidence="13">
    <location>
        <begin position="1780"/>
        <end position="1783"/>
    </location>
</feature>
<feature type="active site" description="Charge relay system; for serine protease NS3 activity" evidence="16">
    <location>
        <position position="1543"/>
    </location>
</feature>
<feature type="active site" description="Charge relay system; for serine protease NS3 activity" evidence="16">
    <location>
        <position position="1567"/>
    </location>
</feature>
<feature type="active site" description="Charge relay system; for serine protease NS3 activity" evidence="16">
    <location>
        <position position="1627"/>
    </location>
</feature>
<feature type="active site" description="For 2'-O-MTase activity" evidence="8">
    <location>
        <position position="2573"/>
    </location>
</feature>
<feature type="active site" description="For 2'-O-MTase activity" evidence="8">
    <location>
        <position position="2658"/>
    </location>
</feature>
<feature type="active site" description="For 2'-O-MTase activity" evidence="8">
    <location>
        <position position="2695"/>
    </location>
</feature>
<feature type="active site" description="For 2'-O-MTase activity" evidence="8">
    <location>
        <position position="2731"/>
    </location>
</feature>
<feature type="binding site" evidence="13">
    <location>
        <begin position="1688"/>
        <end position="1695"/>
    </location>
    <ligand>
        <name>ATP</name>
        <dbReference type="ChEBI" id="CHEBI:30616"/>
    </ligand>
</feature>
<feature type="binding site" evidence="17">
    <location>
        <position position="2568"/>
    </location>
    <ligand>
        <name>S-adenosyl-L-methionine</name>
        <dbReference type="ChEBI" id="CHEBI:59789"/>
    </ligand>
</feature>
<feature type="binding site" evidence="17">
    <location>
        <position position="2598"/>
    </location>
    <ligand>
        <name>S-adenosyl-L-methionine</name>
        <dbReference type="ChEBI" id="CHEBI:59789"/>
    </ligand>
</feature>
<feature type="binding site" evidence="17">
    <location>
        <position position="2599"/>
    </location>
    <ligand>
        <name>S-adenosyl-L-methionine</name>
        <dbReference type="ChEBI" id="CHEBI:59789"/>
    </ligand>
</feature>
<feature type="binding site" evidence="17">
    <location>
        <position position="2616"/>
    </location>
    <ligand>
        <name>S-adenosyl-L-methionine</name>
        <dbReference type="ChEBI" id="CHEBI:59789"/>
    </ligand>
</feature>
<feature type="binding site" evidence="17">
    <location>
        <position position="2617"/>
    </location>
    <ligand>
        <name>S-adenosyl-L-methionine</name>
        <dbReference type="ChEBI" id="CHEBI:59789"/>
    </ligand>
</feature>
<feature type="binding site" evidence="17">
    <location>
        <position position="2643"/>
    </location>
    <ligand>
        <name>S-adenosyl-L-methionine</name>
        <dbReference type="ChEBI" id="CHEBI:59789"/>
    </ligand>
</feature>
<feature type="binding site" evidence="17">
    <location>
        <position position="2644"/>
    </location>
    <ligand>
        <name>S-adenosyl-L-methionine</name>
        <dbReference type="ChEBI" id="CHEBI:59789"/>
    </ligand>
</feature>
<feature type="binding site" evidence="17">
    <location>
        <position position="2659"/>
    </location>
    <ligand>
        <name>S-adenosyl-L-methionine</name>
        <dbReference type="ChEBI" id="CHEBI:59789"/>
    </ligand>
</feature>
<feature type="binding site" evidence="17">
    <location>
        <position position="2733"/>
    </location>
    <ligand>
        <name>S-adenosyl-L-methionine</name>
        <dbReference type="ChEBI" id="CHEBI:59789"/>
    </ligand>
</feature>
<feature type="binding site" evidence="3">
    <location>
        <position position="2951"/>
    </location>
    <ligand>
        <name>Zn(2+)</name>
        <dbReference type="ChEBI" id="CHEBI:29105"/>
        <label>1</label>
    </ligand>
</feature>
<feature type="binding site" evidence="3">
    <location>
        <position position="2955"/>
    </location>
    <ligand>
        <name>Zn(2+)</name>
        <dbReference type="ChEBI" id="CHEBI:29105"/>
        <label>1</label>
    </ligand>
</feature>
<feature type="binding site" evidence="3">
    <location>
        <position position="2960"/>
    </location>
    <ligand>
        <name>Zn(2+)</name>
        <dbReference type="ChEBI" id="CHEBI:29105"/>
        <label>1</label>
    </ligand>
</feature>
<feature type="binding site" evidence="3">
    <location>
        <position position="2963"/>
    </location>
    <ligand>
        <name>Zn(2+)</name>
        <dbReference type="ChEBI" id="CHEBI:29105"/>
        <label>1</label>
    </ligand>
</feature>
<feature type="binding site" evidence="3">
    <location>
        <position position="3225"/>
    </location>
    <ligand>
        <name>Zn(2+)</name>
        <dbReference type="ChEBI" id="CHEBI:29105"/>
        <label>2</label>
    </ligand>
</feature>
<feature type="binding site" evidence="3">
    <location>
        <position position="3241"/>
    </location>
    <ligand>
        <name>Zn(2+)</name>
        <dbReference type="ChEBI" id="CHEBI:29105"/>
        <label>2</label>
    </ligand>
</feature>
<feature type="binding site" evidence="3">
    <location>
        <position position="3360"/>
    </location>
    <ligand>
        <name>Zn(2+)</name>
        <dbReference type="ChEBI" id="CHEBI:29105"/>
        <label>2</label>
    </ligand>
</feature>
<feature type="site" description="Cleavage; by viral protease NS3" evidence="1">
    <location>
        <begin position="94"/>
        <end position="95"/>
    </location>
</feature>
<feature type="site" description="Cleavage; by host signal peptidase" evidence="1">
    <location>
        <begin position="114"/>
        <end position="115"/>
    </location>
</feature>
<feature type="site" description="Cleavage; by host signal peptidase" evidence="1">
    <location>
        <begin position="115"/>
        <end position="116"/>
    </location>
</feature>
<feature type="site" description="Cleavage; by host furin" evidence="2">
    <location>
        <begin position="203"/>
        <end position="204"/>
    </location>
</feature>
<feature type="site" description="Cleavage; by host signal peptidase" evidence="2">
    <location>
        <begin position="278"/>
        <end position="279"/>
    </location>
</feature>
<feature type="site" description="Cleavage; by host signal peptidase" evidence="1">
    <location>
        <begin position="775"/>
        <end position="776"/>
    </location>
</feature>
<feature type="site" description="Cleavage; by host" evidence="2">
    <location>
        <begin position="1128"/>
        <end position="1129"/>
    </location>
</feature>
<feature type="site" description="Cleavage; by viral protease NS3" evidence="2">
    <location>
        <begin position="1358"/>
        <end position="1359"/>
    </location>
</feature>
<feature type="site" description="Cleavage; by autolysis" evidence="1">
    <location>
        <begin position="1489"/>
        <end position="1490"/>
    </location>
</feature>
<feature type="site" description="Involved in NS3 ATPase and RTPase activities" evidence="3">
    <location>
        <position position="1950"/>
    </location>
</feature>
<feature type="site" description="Involved in NS3 ATPase and RTPase activities" evidence="3">
    <location>
        <position position="1953"/>
    </location>
</feature>
<feature type="site" description="Cleavage; by autolysis" evidence="1">
    <location>
        <begin position="2111"/>
        <end position="2112"/>
    </location>
</feature>
<feature type="site" description="Cleavage; by viral protease NS3" evidence="1">
    <location>
        <begin position="2237"/>
        <end position="2238"/>
    </location>
</feature>
<feature type="site" description="Cleavage; by host signal peptidase" evidence="1">
    <location>
        <begin position="2260"/>
        <end position="2261"/>
    </location>
</feature>
<feature type="site" description="Cleavage; by viral protease NS3" evidence="1">
    <location>
        <begin position="2512"/>
        <end position="2513"/>
    </location>
</feature>
<feature type="site" description="mRNA cap binding" evidence="17">
    <location>
        <position position="2525"/>
    </location>
</feature>
<feature type="site" description="mRNA cap binding; via carbonyl oxygen" evidence="17">
    <location>
        <position position="2528"/>
    </location>
</feature>
<feature type="site" description="mRNA cap binding" evidence="17">
    <location>
        <position position="2529"/>
    </location>
</feature>
<feature type="site" description="mRNA cap binding; via carbonyl oxygen" evidence="17">
    <location>
        <position position="2531"/>
    </location>
</feature>
<feature type="site" description="mRNA cap binding" evidence="17">
    <location>
        <position position="2536"/>
    </location>
</feature>
<feature type="site" description="mRNA cap binding" evidence="17">
    <location>
        <position position="2540"/>
    </location>
</feature>
<feature type="site" description="Essential for 2'-O-methyltransferase activity" evidence="17">
    <location>
        <position position="2573"/>
    </location>
</feature>
<feature type="site" description="Essential for 2'-O-methyltransferase and N-7 methyltransferase activity" evidence="17">
    <location>
        <position position="2658"/>
    </location>
</feature>
<feature type="site" description="mRNA cap binding" evidence="17">
    <location>
        <position position="2662"/>
    </location>
</feature>
<feature type="site" description="Essential for 2'-O-methyltransferase activity" evidence="17">
    <location>
        <position position="2695"/>
    </location>
</feature>
<feature type="site" description="mRNA cap binding" evidence="17">
    <location>
        <position position="2726"/>
    </location>
</feature>
<feature type="site" description="mRNA cap binding" evidence="17">
    <location>
        <position position="2728"/>
    </location>
</feature>
<feature type="site" description="Essential for 2'-O-methyltransferase activity" evidence="17">
    <location>
        <position position="2731"/>
    </location>
</feature>
<feature type="modified residue" description="N6-acetyllysine; by host" evidence="7">
    <location>
        <position position="1884"/>
    </location>
</feature>
<feature type="modified residue" description="Phosphoserine" evidence="1">
    <location>
        <position position="2568"/>
    </location>
</feature>
<feature type="glycosylation site" description="N-linked (GlcNAc...) asparagine; by host" evidence="11">
    <location>
        <position position="142"/>
    </location>
</feature>
<feature type="glycosylation site" description="N-linked (GlcNAc...) asparagine; by host" evidence="4 11">
    <location>
        <position position="432"/>
    </location>
</feature>
<feature type="glycosylation site" description="N-linked (GlcNAc...) asparagine; by host" evidence="11">
    <location>
        <position position="860"/>
    </location>
</feature>
<feature type="glycosylation site" description="N-linked (GlcNAc...) asparagine; by host" evidence="11">
    <location>
        <position position="983"/>
    </location>
</feature>
<feature type="glycosylation site" description="N-linked (GlcNAc...) asparagine; by host" evidence="11">
    <location>
        <position position="999"/>
    </location>
</feature>
<feature type="disulfide bond" evidence="4">
    <location>
        <begin position="281"/>
        <end position="308"/>
    </location>
</feature>
<feature type="disulfide bond" evidence="5">
    <location>
        <begin position="338"/>
        <end position="399"/>
    </location>
</feature>
<feature type="disulfide bond" evidence="4">
    <location>
        <begin position="338"/>
        <end position="394"/>
    </location>
</feature>
<feature type="disulfide bond" evidence="4">
    <location>
        <begin position="352"/>
        <end position="383"/>
    </location>
</feature>
<feature type="disulfide bond" evidence="4">
    <location>
        <begin position="370"/>
        <end position="399"/>
    </location>
</feature>
<feature type="disulfide bond" evidence="5">
    <location>
        <begin position="370"/>
        <end position="394"/>
    </location>
</feature>
<feature type="disulfide bond" evidence="4">
    <location>
        <begin position="464"/>
        <end position="568"/>
    </location>
</feature>
<feature type="disulfide bond" evidence="4">
    <location>
        <begin position="585"/>
        <end position="617"/>
    </location>
</feature>
<feature type="disulfide bond" evidence="5">
    <location>
        <begin position="779"/>
        <end position="790"/>
    </location>
</feature>
<feature type="disulfide bond" evidence="5">
    <location>
        <begin position="830"/>
        <end position="920"/>
    </location>
</feature>
<feature type="disulfide bond" evidence="5">
    <location>
        <begin position="955"/>
        <end position="1000"/>
    </location>
</feature>
<feature type="disulfide bond" evidence="5">
    <location>
        <begin position="1057"/>
        <end position="1106"/>
    </location>
</feature>
<feature type="disulfide bond" evidence="5">
    <location>
        <begin position="1068"/>
        <end position="1090"/>
    </location>
</feature>
<feature type="disulfide bond" evidence="5">
    <location>
        <begin position="1089"/>
        <end position="1093"/>
    </location>
</feature>
<feature type="helix" evidence="20">
    <location>
        <begin position="587"/>
        <end position="589"/>
    </location>
</feature>
<feature type="strand" evidence="20">
    <location>
        <begin position="590"/>
        <end position="597"/>
    </location>
</feature>
<feature type="strand" evidence="20">
    <location>
        <begin position="600"/>
        <end position="602"/>
    </location>
</feature>
<feature type="strand" evidence="20">
    <location>
        <begin position="604"/>
        <end position="610"/>
    </location>
</feature>
<feature type="strand" evidence="20">
    <location>
        <begin position="612"/>
        <end position="614"/>
    </location>
</feature>
<feature type="strand" evidence="20">
    <location>
        <begin position="616"/>
        <end position="618"/>
    </location>
</feature>
<feature type="strand" evidence="20">
    <location>
        <begin position="621"/>
        <end position="625"/>
    </location>
</feature>
<feature type="strand" evidence="20">
    <location>
        <begin position="635"/>
        <end position="640"/>
    </location>
</feature>
<feature type="strand" evidence="20">
    <location>
        <begin position="649"/>
        <end position="654"/>
    </location>
</feature>
<feature type="strand" evidence="20">
    <location>
        <begin position="657"/>
        <end position="664"/>
    </location>
</feature>
<feature type="strand" evidence="20">
    <location>
        <begin position="667"/>
        <end position="673"/>
    </location>
</feature>
<evidence type="ECO:0000250" key="1">
    <source>
        <dbReference type="UniProtKB" id="P03314"/>
    </source>
</evidence>
<evidence type="ECO:0000250" key="2">
    <source>
        <dbReference type="UniProtKB" id="P06935"/>
    </source>
</evidence>
<evidence type="ECO:0000250" key="3">
    <source>
        <dbReference type="UniProtKB" id="P14335"/>
    </source>
</evidence>
<evidence type="ECO:0000250" key="4">
    <source>
        <dbReference type="UniProtKB" id="P14336"/>
    </source>
</evidence>
<evidence type="ECO:0000250" key="5">
    <source>
        <dbReference type="UniProtKB" id="P17763"/>
    </source>
</evidence>
<evidence type="ECO:0000250" key="6">
    <source>
        <dbReference type="UniProtKB" id="Q01299"/>
    </source>
</evidence>
<evidence type="ECO:0000250" key="7">
    <source>
        <dbReference type="UniProtKB" id="Q32ZE1"/>
    </source>
</evidence>
<evidence type="ECO:0000250" key="8">
    <source>
        <dbReference type="UniProtKB" id="Q6YMS4"/>
    </source>
</evidence>
<evidence type="ECO:0000250" key="9">
    <source>
        <dbReference type="UniProtKB" id="Q9Q6P4"/>
    </source>
</evidence>
<evidence type="ECO:0000255" key="10"/>
<evidence type="ECO:0000255" key="11">
    <source>
        <dbReference type="PROSITE-ProRule" id="PRU00498"/>
    </source>
</evidence>
<evidence type="ECO:0000255" key="12">
    <source>
        <dbReference type="PROSITE-ProRule" id="PRU00539"/>
    </source>
</evidence>
<evidence type="ECO:0000255" key="13">
    <source>
        <dbReference type="PROSITE-ProRule" id="PRU00541"/>
    </source>
</evidence>
<evidence type="ECO:0000255" key="14">
    <source>
        <dbReference type="PROSITE-ProRule" id="PRU00542"/>
    </source>
</evidence>
<evidence type="ECO:0000255" key="15">
    <source>
        <dbReference type="PROSITE-ProRule" id="PRU00859"/>
    </source>
</evidence>
<evidence type="ECO:0000255" key="16">
    <source>
        <dbReference type="PROSITE-ProRule" id="PRU00860"/>
    </source>
</evidence>
<evidence type="ECO:0000255" key="17">
    <source>
        <dbReference type="PROSITE-ProRule" id="PRU00924"/>
    </source>
</evidence>
<evidence type="ECO:0000256" key="18">
    <source>
        <dbReference type="SAM" id="MobiDB-lite"/>
    </source>
</evidence>
<evidence type="ECO:0000305" key="19"/>
<evidence type="ECO:0007829" key="20">
    <source>
        <dbReference type="PDB" id="7SGT"/>
    </source>
</evidence>
<accession>Q04538</accession>
<name>POLG_POWVL</name>
<protein>
    <recommendedName>
        <fullName>Genome polyprotein</fullName>
    </recommendedName>
    <component>
        <recommendedName>
            <fullName>Peptide 2k</fullName>
        </recommendedName>
    </component>
    <component>
        <recommendedName>
            <fullName>Capsid protein C</fullName>
        </recommendedName>
        <alternativeName>
            <fullName>Core protein</fullName>
        </alternativeName>
    </component>
    <component>
        <recommendedName>
            <fullName>Protein prM</fullName>
        </recommendedName>
    </component>
    <component>
        <recommendedName>
            <fullName>Peptide pr</fullName>
        </recommendedName>
    </component>
    <component>
        <recommendedName>
            <fullName>Small envelope protein M</fullName>
        </recommendedName>
        <alternativeName>
            <fullName>Matrix protein</fullName>
        </alternativeName>
    </component>
    <component>
        <recommendedName>
            <fullName>Envelope protein E</fullName>
        </recommendedName>
    </component>
    <component>
        <recommendedName>
            <fullName>Non-structural protein 1</fullName>
            <shortName>NS1</shortName>
        </recommendedName>
    </component>
    <component>
        <recommendedName>
            <fullName>Non-structural protein 2A</fullName>
            <shortName>NS2A</shortName>
        </recommendedName>
    </component>
    <component>
        <recommendedName>
            <fullName>Serine protease subunit NS2B</fullName>
        </recommendedName>
        <alternativeName>
            <fullName>Flavivirin protease NS2B regulatory subunit</fullName>
        </alternativeName>
        <alternativeName>
            <fullName>Non-structural protein 2B</fullName>
        </alternativeName>
    </component>
    <component>
        <recommendedName>
            <fullName>Serine protease NS3</fullName>
            <ecNumber>3.4.21.91</ecNumber>
            <ecNumber>3.6.1.15</ecNumber>
            <ecNumber>3.6.4.13</ecNumber>
        </recommendedName>
        <alternativeName>
            <fullName>Flavivirin protease NS3 catalytic subunit</fullName>
        </alternativeName>
        <alternativeName>
            <fullName>Non-structural protein 3</fullName>
        </alternativeName>
    </component>
    <component>
        <recommendedName>
            <fullName>Non-structural protein 4A</fullName>
            <shortName>NS4A</shortName>
        </recommendedName>
    </component>
    <component>
        <recommendedName>
            <fullName>Non-structural protein 4B</fullName>
            <shortName>NS4B</shortName>
        </recommendedName>
    </component>
    <component>
        <recommendedName>
            <fullName>RNA-directed RNA polymerase NS5</fullName>
            <ecNumber evidence="17">2.1.1.56</ecNumber>
            <ecNumber evidence="17">2.1.1.57</ecNumber>
            <ecNumber evidence="12">2.7.7.48</ecNumber>
        </recommendedName>
        <alternativeName>
            <fullName>NS5</fullName>
        </alternativeName>
    </component>
</protein>
<organismHost>
    <name type="scientific">Dermacentor andersoni</name>
    <name type="common">Rocky mountain wood tick</name>
    <dbReference type="NCBI Taxonomy" id="34620"/>
</organismHost>
<organismHost>
    <name type="scientific">Homo sapiens</name>
    <name type="common">Human</name>
    <dbReference type="NCBI Taxonomy" id="9606"/>
</organismHost>
<organismHost>
    <name type="scientific">Ixodes cookei</name>
    <dbReference type="NCBI Taxonomy" id="35565"/>
</organismHost>
<organismHost>
    <name type="scientific">Ixodes scapularis</name>
    <name type="common">Black-legged tick</name>
    <name type="synonym">Deer tick</name>
    <dbReference type="NCBI Taxonomy" id="6945"/>
</organismHost>
<organismHost>
    <name type="scientific">Ixodes spinipalpis</name>
    <dbReference type="NCBI Taxonomy" id="34614"/>
</organismHost>
<organismHost>
    <name type="scientific">Lepus americanus</name>
    <name type="common">Snowshoe hare</name>
    <dbReference type="NCBI Taxonomy" id="48086"/>
</organismHost>
<organismHost>
    <name type="scientific">Marmota monax</name>
    <name type="common">Woodchuck</name>
    <dbReference type="NCBI Taxonomy" id="9995"/>
</organismHost>
<sequence>MMTTSKGKGGGPPRRKLKVTANKSRPATSPMPKGFVLSRMLGILWHAVTGTARPPVLKMFWKTVPLRQAEAVLKKIKRVIGNLMQSLHMRGRRRSGVDWTWIFLTMALMTMAMATTIHRDREGYMVMRASGRDAASQVRVQNGTCVILATDMGEWCEDSITYSCVTIDQEEEPVDVDCFCRGVDRVKLEYGRCGRQAGSRGKRSVVIPTHAQKDMVGRGHAWLKGDNIRDHVTRVEGWMWKNKLLTAAIVALAWLMVDSWMARVTVILLALSLGPVYATRCTHLENRDFVTGTQGTTRVSLVLELGGCVTITAEGKPSIDVWLEDIFQESPAETREYCLHAKLTNTKVEARCPTTGPATLPEEHQANMVCKRDQSDRGWGNHCGFFGKGSIVACAKFECEEAKKAVGHVYDSTKITYVVKVEPHTGDYLAANETNSNRKSAQFTVASEKVILRLGDYGDVSLTCKVASGIDVAQTVVMSLDSSKDHLPSAWQVHRDWFEDLALPWKHKDNQDWNSVEKLVEFGPPHAVKMDVFNLGDQTAVLLKSLAGVPLASVEGQKYHLKSGHVTCDVGLEKLKLKGTTYSMCDKAKFKWKRVPVDSGHDTVVMEVSYTGSDKPCRIPVRAVAHGVPAVNVAMLITPNPTIETNGGGFIEMQLPPGDNIIYVGDLSQQWFQKGSTIGRMFEKTRRGLERLSVVGEHAWDFGSVGGVLSSVGKAIHTVLGGAFNTLFGGVGFIPKMLLGVALVWLGLNARNPTMSMTFLAVGALTLMMTMGVGADYGCAIDPERMEIRCGEGLVVWKEVSEWYDGYAYHPESPDTLAQALREAFERGVCGVVPQNRLEMAMWRSTAPELNLVLSEGEANLTIVVDKTDPADYRGGTPMVLKKTGKESKVSWKSWGKSILWSVPDSPRRMMMGVDGVGECPLYRRATGVFTVAEFGVGLRTKVFLDLRGEASKECDTGVMGAAVKNGKAIHTDQSMWMSSFRNDTGTYIHELILTDLRNCTWPASHTIDNDGVLDSHLFLPVTLAGPRSKYNRIPGYSEQVRGPWDQTPLRVVRDHCPGTSVRIDSHCDKRGASVRSTTESGKIIPEWCCRACELPPVTFRSGTDCWYAMEIRPVHSQGGLVRSMVVADNGALLSEGGVPGLVAVFVLMEFLLRRRPGSVTSILWGGILMLGLLVTGLVRVEEIVRYVIAVGVTFHLELGPETMVLVMLQAVFNMRTCYLMGFLVKRVITTREVVTVYFLLLVLEMGIPEMNFGHLWEWADALAMGLLIIKASAMEDRRGLGFLLAGLMTQRHLVAVHHGLMVFLTVALAVVGRNIYNGQKERKGLCFTVPLASLLGGSGSGLRMLALWECLGGRGRRSLSEPLTVVGVMLAMASGLLRHSSQEALLALSAGSFLILMLILGTRRLQLTAEWAGVVEWNPELVNEGGEVSLKVRQDAMGNLHLTEVEREERRLALWLVFGLLASAYHWSGILVTMGAWTVYELFSSTRRTDLVFSGQLPDQGEKRSFDIKEGVYRIYAPGLFWGYRQIGVGYGTKGVLHTMWHVTRGAALSVEGATSGPYWADVREDVVCYGGAWGLDKKWGGEVVQVHAFPPDSGHKIHQCQPGKLNLEGGRVLGAIPIDLPRGTSGSPIINAQGDVLGLYGNGLKSNDVYISSIAQGNVEKSRPEMPLAVQGGKWTSKGSITVLDMHPGSGKTHRVLPELIRECIDKRLRTVVLAPTRVVLKEMERALQGKRVKFHSAAVDNASSSSGAIVDVMCHATYVNRRLLPQGRQNWEVAIMDEAHWTDPHSIAARGHLYSLAKENRCALVLMTATPPGKSEAFPESKGAIVSEEKPIPEGEWRDGFDWITEFEGRTAWFVPSIAKGGAIARTLRQKGKSVICLNSKTFDKDYGRVHEEKPDFVVTTDISEMGANLDVNRVIDGRTNIKPEEIDGKVELIGTRRVTTASAAQRRGRVGRHEGRTDLYVYSGQCDDDDSSLVQWKEAQILLDNITTVRGPVATFYGPEQGKMLEVAGHFRLTEEKRKHFRHLLTNCDFTPWLAWHVAANTACVTDRKWTWEGPDENAIDGPGGELVTFRSPNGAERKLKPIWKDSRMFREGRDVADFIQYASGRRSAVDILTGLGGVPDLLRLRCTAAWDVVYTLLNETPGSRAMKMAERDAPEAMLTLLEVAVLGIATLGVVWCFIVRTSVSRMVLGTLVLAVALILLWLGGMDYGTMAGVALIFYLLLTVLQPEPGKQRSGEDNRLAFLLIGLGSVVGLVAANELGYLEQTKTDISGLFRREDQGGMVWDAWTNIDIQPARSWGTYVLIVSLFTPYMLHQLQTKIQRLVNSSVAAGTQAMRDLGGGTPFFGVAGHVVALGVTSLVGATPTSLALGVALAALHLAVVTSGLEAELTQRAHRAFFSAMVKNPMVDGEIINPIPDGDPKPALYERKMSLFLAIGLCIAAVALNRTAAAMTEAGAVAVAALGQLLRPEEESWWTMPMACGMAGLVRGSLWGLLPVLHRIWLRTQGARRGGAEGSTLGDIWKQRLNSCTKEEFFAYRRTGVMETNRDQARELLRRGETNMGLAVSRGCAKLAWLEERGYATLKGEVVDLGCGRGGWSYYAASRPSVMAVRAYTIGGKGHEAPRLVTSLGWNLIKFRSGMDVFSMATTRADTILCDIGESSPDPEKEGARSRRVILLMEQWKARNPDAAAVFKVLAPYRPEVLEALHRFQLQWGGGLVRVPFSRNSTHEMYYSTAVTGNLVNSVNVLSRKLLARFGETRGPIQVPEIDLGTGTRCVTLAEDKVKPRDVAERIGALREQYSESWHEDKEHPYRTWQYWGSYRTPATGSAASLINGVVKLLSWPWNAREDVTRMAMTDTTAFGQQRVFKEKVDTKAQEPQPGTRVIMRAVSDWLLEHLSRRAKVRMCTKDEFIAKVRSNAALGAWSDEQNKWSSAKEAVEDPEFWKLVDEERSRHLKGQCRHCVYNMMGKREKKLGEFGVAKGSRAIWYMWLGSRFLEFEVLGFLNEEHWASREVSGAGVEGTSLNYLGWLLRELGMKDGGKLYADDTAGWDTRITNADLEDEEQILRYMEGEHHVLAKTILEKAYHAKVVKVARPSPQGGCVMDVITRRDQRGSGQVVTYALNTITNMKVQLIRMMEGEGVIGPADSQDPRLKRVETWLKEHGVERLGRMLVSGDDCVVKPIDDRFGKALYFLNDMAKVRKDVGEWEPSMGFTEWEEVPFCSHHFHELVMKDGRSLIVPCRDQDELVGRARVSPGCGWSVRETACLSKAYGQMWLLNYFHRRDLRTLGFAICSAVPVSWVPMGRTTWSIHASGEWMTTEDMLRIWNKVWILDNPHMEDKQTVDEWRDIPYLPKTQDLVCSSLVGRKERAEWAKNIWGSVEKVRKLIGPEDYRDYLSSMDRHDLHWELKLESSII</sequence>